<comment type="catalytic activity">
    <reaction evidence="1">
        <text>D-glucuronate = D-fructuronate</text>
        <dbReference type="Rhea" id="RHEA:13049"/>
        <dbReference type="ChEBI" id="CHEBI:58720"/>
        <dbReference type="ChEBI" id="CHEBI:59863"/>
        <dbReference type="EC" id="5.3.1.12"/>
    </reaction>
</comment>
<comment type="catalytic activity">
    <reaction evidence="1">
        <text>aldehydo-D-galacturonate = keto-D-tagaturonate</text>
        <dbReference type="Rhea" id="RHEA:27702"/>
        <dbReference type="ChEBI" id="CHEBI:12952"/>
        <dbReference type="ChEBI" id="CHEBI:17886"/>
        <dbReference type="EC" id="5.3.1.12"/>
    </reaction>
</comment>
<comment type="pathway">
    <text evidence="1">Carbohydrate metabolism; pentose and glucuronate interconversion.</text>
</comment>
<comment type="similarity">
    <text evidence="1">Belongs to the metallo-dependent hydrolases superfamily. Uronate isomerase family.</text>
</comment>
<accession>B5YRY4</accession>
<proteinExistence type="inferred from homology"/>
<protein>
    <recommendedName>
        <fullName evidence="1">Uronate isomerase</fullName>
        <ecNumber evidence="1">5.3.1.12</ecNumber>
    </recommendedName>
    <alternativeName>
        <fullName evidence="1">Glucuronate isomerase</fullName>
    </alternativeName>
    <alternativeName>
        <fullName evidence="1">Uronic isomerase</fullName>
    </alternativeName>
</protein>
<organism>
    <name type="scientific">Escherichia coli O157:H7 (strain EC4115 / EHEC)</name>
    <dbReference type="NCBI Taxonomy" id="444450"/>
    <lineage>
        <taxon>Bacteria</taxon>
        <taxon>Pseudomonadati</taxon>
        <taxon>Pseudomonadota</taxon>
        <taxon>Gammaproteobacteria</taxon>
        <taxon>Enterobacterales</taxon>
        <taxon>Enterobacteriaceae</taxon>
        <taxon>Escherichia</taxon>
    </lineage>
</organism>
<reference key="1">
    <citation type="journal article" date="2011" name="Proc. Natl. Acad. Sci. U.S.A.">
        <title>Genomic anatomy of Escherichia coli O157:H7 outbreaks.</title>
        <authorList>
            <person name="Eppinger M."/>
            <person name="Mammel M.K."/>
            <person name="Leclerc J.E."/>
            <person name="Ravel J."/>
            <person name="Cebula T.A."/>
        </authorList>
    </citation>
    <scope>NUCLEOTIDE SEQUENCE [LARGE SCALE GENOMIC DNA]</scope>
    <source>
        <strain>EC4115 / EHEC</strain>
    </source>
</reference>
<feature type="chain" id="PRO_1000131589" description="Uronate isomerase">
    <location>
        <begin position="1"/>
        <end position="470"/>
    </location>
</feature>
<evidence type="ECO:0000255" key="1">
    <source>
        <dbReference type="HAMAP-Rule" id="MF_00675"/>
    </source>
</evidence>
<sequence>MTPFMTEDFLLDTEFARRLYHDYAKDQPIFDYHCHLPPQQIAEDYRFKNLYDIWLKGDHYKWRAMRTNGVAERLCTGDASDREKFDAWAATVPHTIGNPLYHWTHLELRRPFGITGKLLSPSTADEIWNECNELLAQDNFSARGIMQQMNVKMVGTTDDPIDSLEHHAEIAKDGSFTIKVLPSWRPDKAFNIEQATFNDYMAKLGEVSDTDIRRFADLQTALTKRLDHFAAHGCKVSDHALDVVMFAEANEAELDSILARRLAGETLSEHEVAQFKTAVLVFLGAEYARRGWVQQYHIGALRNNNLRQFKLLGPDVGFDSINDRPMAEELSKLLSKQNEENLLPKTILYCLNPRDNEVLGTMSGNFQGEGMPGKMQFGSGWWFNDQKDGMERQMTQLAQLGLLSRFVGMLTDSRSFLSYTRHEYFRRILCQMIGRWVEAGEAPADINLLGEMVKNICFNNARDYFAIELN</sequence>
<keyword id="KW-0413">Isomerase</keyword>
<name>UXAC_ECO5E</name>
<dbReference type="EC" id="5.3.1.12" evidence="1"/>
<dbReference type="EMBL" id="CP001164">
    <property type="protein sequence ID" value="ACI36662.1"/>
    <property type="molecule type" value="Genomic_DNA"/>
</dbReference>
<dbReference type="RefSeq" id="WP_000187445.1">
    <property type="nucleotide sequence ID" value="NC_011353.1"/>
</dbReference>
<dbReference type="SMR" id="B5YRY4"/>
<dbReference type="KEGG" id="ecf:ECH74115_4407"/>
<dbReference type="HOGENOM" id="CLU_044465_1_0_6"/>
<dbReference type="UniPathway" id="UPA00246"/>
<dbReference type="GO" id="GO:0008880">
    <property type="term" value="F:glucuronate isomerase activity"/>
    <property type="evidence" value="ECO:0007669"/>
    <property type="project" value="UniProtKB-UniRule"/>
</dbReference>
<dbReference type="GO" id="GO:0019698">
    <property type="term" value="P:D-galacturonate catabolic process"/>
    <property type="evidence" value="ECO:0007669"/>
    <property type="project" value="TreeGrafter"/>
</dbReference>
<dbReference type="GO" id="GO:0042840">
    <property type="term" value="P:D-glucuronate catabolic process"/>
    <property type="evidence" value="ECO:0007669"/>
    <property type="project" value="TreeGrafter"/>
</dbReference>
<dbReference type="FunFam" id="1.10.2020.10:FF:000001">
    <property type="entry name" value="Uronate isomerase"/>
    <property type="match status" value="1"/>
</dbReference>
<dbReference type="Gene3D" id="3.20.20.140">
    <property type="entry name" value="Metal-dependent hydrolases"/>
    <property type="match status" value="1"/>
</dbReference>
<dbReference type="Gene3D" id="1.10.2020.10">
    <property type="entry name" value="uronate isomerase, domain 2, chain A"/>
    <property type="match status" value="1"/>
</dbReference>
<dbReference type="HAMAP" id="MF_00675">
    <property type="entry name" value="UxaC"/>
    <property type="match status" value="1"/>
</dbReference>
<dbReference type="InterPro" id="IPR032466">
    <property type="entry name" value="Metal_Hydrolase"/>
</dbReference>
<dbReference type="InterPro" id="IPR003766">
    <property type="entry name" value="Uronate_isomerase"/>
</dbReference>
<dbReference type="NCBIfam" id="NF002794">
    <property type="entry name" value="PRK02925.1"/>
    <property type="match status" value="1"/>
</dbReference>
<dbReference type="PANTHER" id="PTHR30068">
    <property type="entry name" value="URONATE ISOMERASE"/>
    <property type="match status" value="1"/>
</dbReference>
<dbReference type="PANTHER" id="PTHR30068:SF4">
    <property type="entry name" value="URONATE ISOMERASE"/>
    <property type="match status" value="1"/>
</dbReference>
<dbReference type="Pfam" id="PF02614">
    <property type="entry name" value="UxaC"/>
    <property type="match status" value="1"/>
</dbReference>
<dbReference type="SUPFAM" id="SSF51556">
    <property type="entry name" value="Metallo-dependent hydrolases"/>
    <property type="match status" value="1"/>
</dbReference>
<gene>
    <name evidence="1" type="primary">uxaC</name>
    <name type="ordered locus">ECH74115_4407</name>
</gene>